<gene>
    <name evidence="1" type="primary">rplP</name>
    <name type="ordered locus">HNE_2844</name>
</gene>
<dbReference type="EMBL" id="CP000158">
    <property type="protein sequence ID" value="ABI76499.1"/>
    <property type="molecule type" value="Genomic_DNA"/>
</dbReference>
<dbReference type="RefSeq" id="WP_011647819.1">
    <property type="nucleotide sequence ID" value="NC_008358.1"/>
</dbReference>
<dbReference type="SMR" id="Q0BYC1"/>
<dbReference type="STRING" id="228405.HNE_2844"/>
<dbReference type="KEGG" id="hne:HNE_2844"/>
<dbReference type="eggNOG" id="COG0197">
    <property type="taxonomic scope" value="Bacteria"/>
</dbReference>
<dbReference type="HOGENOM" id="CLU_078858_2_1_5"/>
<dbReference type="Proteomes" id="UP000001959">
    <property type="component" value="Chromosome"/>
</dbReference>
<dbReference type="GO" id="GO:0022625">
    <property type="term" value="C:cytosolic large ribosomal subunit"/>
    <property type="evidence" value="ECO:0007669"/>
    <property type="project" value="TreeGrafter"/>
</dbReference>
<dbReference type="GO" id="GO:0019843">
    <property type="term" value="F:rRNA binding"/>
    <property type="evidence" value="ECO:0007669"/>
    <property type="project" value="UniProtKB-UniRule"/>
</dbReference>
<dbReference type="GO" id="GO:0003735">
    <property type="term" value="F:structural constituent of ribosome"/>
    <property type="evidence" value="ECO:0007669"/>
    <property type="project" value="InterPro"/>
</dbReference>
<dbReference type="GO" id="GO:0000049">
    <property type="term" value="F:tRNA binding"/>
    <property type="evidence" value="ECO:0007669"/>
    <property type="project" value="UniProtKB-KW"/>
</dbReference>
<dbReference type="GO" id="GO:0006412">
    <property type="term" value="P:translation"/>
    <property type="evidence" value="ECO:0007669"/>
    <property type="project" value="UniProtKB-UniRule"/>
</dbReference>
<dbReference type="CDD" id="cd01433">
    <property type="entry name" value="Ribosomal_L16_L10e"/>
    <property type="match status" value="1"/>
</dbReference>
<dbReference type="FunFam" id="3.90.1170.10:FF:000001">
    <property type="entry name" value="50S ribosomal protein L16"/>
    <property type="match status" value="1"/>
</dbReference>
<dbReference type="Gene3D" id="3.90.1170.10">
    <property type="entry name" value="Ribosomal protein L10e/L16"/>
    <property type="match status" value="1"/>
</dbReference>
<dbReference type="HAMAP" id="MF_01342">
    <property type="entry name" value="Ribosomal_uL16"/>
    <property type="match status" value="1"/>
</dbReference>
<dbReference type="InterPro" id="IPR047873">
    <property type="entry name" value="Ribosomal_uL16"/>
</dbReference>
<dbReference type="InterPro" id="IPR000114">
    <property type="entry name" value="Ribosomal_uL16_bact-type"/>
</dbReference>
<dbReference type="InterPro" id="IPR020798">
    <property type="entry name" value="Ribosomal_uL16_CS"/>
</dbReference>
<dbReference type="InterPro" id="IPR016180">
    <property type="entry name" value="Ribosomal_uL16_dom"/>
</dbReference>
<dbReference type="InterPro" id="IPR036920">
    <property type="entry name" value="Ribosomal_uL16_sf"/>
</dbReference>
<dbReference type="NCBIfam" id="TIGR01164">
    <property type="entry name" value="rplP_bact"/>
    <property type="match status" value="1"/>
</dbReference>
<dbReference type="PANTHER" id="PTHR12220">
    <property type="entry name" value="50S/60S RIBOSOMAL PROTEIN L16"/>
    <property type="match status" value="1"/>
</dbReference>
<dbReference type="PANTHER" id="PTHR12220:SF13">
    <property type="entry name" value="LARGE RIBOSOMAL SUBUNIT PROTEIN UL16M"/>
    <property type="match status" value="1"/>
</dbReference>
<dbReference type="Pfam" id="PF00252">
    <property type="entry name" value="Ribosomal_L16"/>
    <property type="match status" value="1"/>
</dbReference>
<dbReference type="PRINTS" id="PR00060">
    <property type="entry name" value="RIBOSOMALL16"/>
</dbReference>
<dbReference type="SUPFAM" id="SSF54686">
    <property type="entry name" value="Ribosomal protein L16p/L10e"/>
    <property type="match status" value="1"/>
</dbReference>
<dbReference type="PROSITE" id="PS00586">
    <property type="entry name" value="RIBOSOMAL_L16_1"/>
    <property type="match status" value="1"/>
</dbReference>
<dbReference type="PROSITE" id="PS00701">
    <property type="entry name" value="RIBOSOMAL_L16_2"/>
    <property type="match status" value="1"/>
</dbReference>
<sequence>MLQPKRTKFRKAFKGQINGQSKGGFTLSFGQFGLKALEPERVTARQIEATRRAITREMKRQGKVWIRVFPDVPVTAKPIEVRMGKGKGGVDRWVARVAPGRILFEIDGVPEDIARQALALGAAKLPIKTKVVKRIEGI</sequence>
<name>RL16_HYPNA</name>
<protein>
    <recommendedName>
        <fullName evidence="1">Large ribosomal subunit protein uL16</fullName>
    </recommendedName>
    <alternativeName>
        <fullName evidence="2">50S ribosomal protein L16</fullName>
    </alternativeName>
</protein>
<proteinExistence type="inferred from homology"/>
<accession>Q0BYC1</accession>
<comment type="function">
    <text evidence="1">Binds 23S rRNA and is also seen to make contacts with the A and possibly P site tRNAs.</text>
</comment>
<comment type="subunit">
    <text evidence="1">Part of the 50S ribosomal subunit.</text>
</comment>
<comment type="similarity">
    <text evidence="1">Belongs to the universal ribosomal protein uL16 family.</text>
</comment>
<evidence type="ECO:0000255" key="1">
    <source>
        <dbReference type="HAMAP-Rule" id="MF_01342"/>
    </source>
</evidence>
<evidence type="ECO:0000305" key="2"/>
<feature type="chain" id="PRO_1000054635" description="Large ribosomal subunit protein uL16">
    <location>
        <begin position="1"/>
        <end position="138"/>
    </location>
</feature>
<reference key="1">
    <citation type="journal article" date="2006" name="J. Bacteriol.">
        <title>Comparative genomic evidence for a close relationship between the dimorphic prosthecate bacteria Hyphomonas neptunium and Caulobacter crescentus.</title>
        <authorList>
            <person name="Badger J.H."/>
            <person name="Hoover T.R."/>
            <person name="Brun Y.V."/>
            <person name="Weiner R.M."/>
            <person name="Laub M.T."/>
            <person name="Alexandre G."/>
            <person name="Mrazek J."/>
            <person name="Ren Q."/>
            <person name="Paulsen I.T."/>
            <person name="Nelson K.E."/>
            <person name="Khouri H.M."/>
            <person name="Radune D."/>
            <person name="Sosa J."/>
            <person name="Dodson R.J."/>
            <person name="Sullivan S.A."/>
            <person name="Rosovitz M.J."/>
            <person name="Madupu R."/>
            <person name="Brinkac L.M."/>
            <person name="Durkin A.S."/>
            <person name="Daugherty S.C."/>
            <person name="Kothari S.P."/>
            <person name="Giglio M.G."/>
            <person name="Zhou L."/>
            <person name="Haft D.H."/>
            <person name="Selengut J.D."/>
            <person name="Davidsen T.M."/>
            <person name="Yang Q."/>
            <person name="Zafar N."/>
            <person name="Ward N.L."/>
        </authorList>
    </citation>
    <scope>NUCLEOTIDE SEQUENCE [LARGE SCALE GENOMIC DNA]</scope>
    <source>
        <strain>ATCC 15444</strain>
    </source>
</reference>
<organism>
    <name type="scientific">Hyphomonas neptunium (strain ATCC 15444)</name>
    <dbReference type="NCBI Taxonomy" id="228405"/>
    <lineage>
        <taxon>Bacteria</taxon>
        <taxon>Pseudomonadati</taxon>
        <taxon>Pseudomonadota</taxon>
        <taxon>Alphaproteobacteria</taxon>
        <taxon>Hyphomonadales</taxon>
        <taxon>Hyphomonadaceae</taxon>
        <taxon>Hyphomonas</taxon>
    </lineage>
</organism>
<keyword id="KW-1185">Reference proteome</keyword>
<keyword id="KW-0687">Ribonucleoprotein</keyword>
<keyword id="KW-0689">Ribosomal protein</keyword>
<keyword id="KW-0694">RNA-binding</keyword>
<keyword id="KW-0699">rRNA-binding</keyword>
<keyword id="KW-0820">tRNA-binding</keyword>